<evidence type="ECO:0000250" key="1">
    <source>
        <dbReference type="UniProtKB" id="Q6NYC1"/>
    </source>
</evidence>
<evidence type="ECO:0000250" key="2">
    <source>
        <dbReference type="UniProtKB" id="Q9H9V9"/>
    </source>
</evidence>
<evidence type="ECO:0000255" key="3">
    <source>
        <dbReference type="PROSITE-ProRule" id="PRU00538"/>
    </source>
</evidence>
<evidence type="ECO:0000269" key="4">
    <source>
    </source>
</evidence>
<evidence type="ECO:0000303" key="5">
    <source>
    </source>
</evidence>
<evidence type="ECO:0000303" key="6">
    <source>
    </source>
</evidence>
<evidence type="ECO:0000305" key="7"/>
<feature type="chain" id="PRO_0000291960" description="2-oxoglutarate and iron-dependent oxygenase JMJD4">
    <location>
        <begin position="1"/>
        <end position="427"/>
    </location>
</feature>
<feature type="domain" description="JmjC" evidence="3">
    <location>
        <begin position="147"/>
        <end position="306"/>
    </location>
</feature>
<feature type="binding site" evidence="1">
    <location>
        <position position="194"/>
    </location>
    <ligand>
        <name>Fe cation</name>
        <dbReference type="ChEBI" id="CHEBI:24875"/>
        <note>catalytic</note>
    </ligand>
</feature>
<feature type="binding site" evidence="1">
    <location>
        <position position="196"/>
    </location>
    <ligand>
        <name>Fe cation</name>
        <dbReference type="ChEBI" id="CHEBI:24875"/>
        <note>catalytic</note>
    </ligand>
</feature>
<feature type="binding site" evidence="1">
    <location>
        <position position="274"/>
    </location>
    <ligand>
        <name>Fe cation</name>
        <dbReference type="ChEBI" id="CHEBI:24875"/>
        <note>catalytic</note>
    </ligand>
</feature>
<feature type="splice variant" id="VSP_026326" description="In isoform 3." evidence="6">
    <original>WSPFHADIFRSFS</original>
    <variation>C</variation>
    <location>
        <begin position="190"/>
        <end position="202"/>
    </location>
</feature>
<feature type="splice variant" id="VSP_026327" description="In isoform 4." evidence="5">
    <original>SPFHADIFRS</original>
    <variation>RGGSPPGLPW</variation>
    <location>
        <begin position="191"/>
        <end position="200"/>
    </location>
</feature>
<feature type="splice variant" id="VSP_026328" description="In isoform 4." evidence="5">
    <location>
        <begin position="201"/>
        <end position="427"/>
    </location>
</feature>
<comment type="function">
    <text evidence="2 4">Catalyzes the 2-oxoglutarate and iron-dependent C4-lysyl hydroxylation of ETF1 at 'Lys-63' thereby promoting the translational termination efficiency of ETF1 (By similarity). Not essential for embryonic stem cell (ESC) maintenance and the embryonic and postnatal development (PubMed:27147518).</text>
</comment>
<comment type="catalytic activity">
    <reaction evidence="2">
        <text>L-lysyl-[protein] + 2-oxoglutarate + O2 = 4-hydroxy-L-lysyl-[protein] + succinate + CO2</text>
        <dbReference type="Rhea" id="RHEA:57156"/>
        <dbReference type="Rhea" id="RHEA-COMP:9752"/>
        <dbReference type="Rhea" id="RHEA-COMP:15084"/>
        <dbReference type="ChEBI" id="CHEBI:15379"/>
        <dbReference type="ChEBI" id="CHEBI:16526"/>
        <dbReference type="ChEBI" id="CHEBI:16810"/>
        <dbReference type="ChEBI" id="CHEBI:29969"/>
        <dbReference type="ChEBI" id="CHEBI:30031"/>
        <dbReference type="ChEBI" id="CHEBI:141495"/>
    </reaction>
</comment>
<comment type="cofactor">
    <cofactor evidence="2">
        <name>Fe(2+)</name>
        <dbReference type="ChEBI" id="CHEBI:29033"/>
    </cofactor>
</comment>
<comment type="subunit">
    <text evidence="2">Interacts with ETF1 (By similarity). Interacts with the ETF1-GSPT1 complex (By similarity).</text>
</comment>
<comment type="subcellular location">
    <subcellularLocation>
        <location evidence="2">Cytoplasm</location>
    </subcellularLocation>
</comment>
<comment type="alternative products">
    <event type="alternative splicing"/>
    <isoform>
        <id>Q8BFT6-1</id>
        <name>1</name>
        <sequence type="displayed"/>
    </isoform>
    <isoform>
        <id>Q8BFT6-3</id>
        <name>3</name>
        <sequence type="described" ref="VSP_026326"/>
    </isoform>
    <isoform>
        <id>Q8BFT6-4</id>
        <name>4</name>
        <sequence type="described" ref="VSP_026327 VSP_026328"/>
    </isoform>
</comment>
<comment type="disruption phenotype">
    <text evidence="4">Mice are born at the expected Mendelian rate and are healthy, fertile and physiologically normal (PubMed:27147518). Embryonic stem cells (ESCs) exhibit normal colony morphology and cell proliferation rates and maintain normal expression of pluripotent genes (PubMed:27147518).</text>
</comment>
<comment type="similarity">
    <text evidence="7">Belongs to the JMJD6 family.</text>
</comment>
<reference key="1">
    <citation type="journal article" date="2005" name="Science">
        <title>The transcriptional landscape of the mammalian genome.</title>
        <authorList>
            <person name="Carninci P."/>
            <person name="Kasukawa T."/>
            <person name="Katayama S."/>
            <person name="Gough J."/>
            <person name="Frith M.C."/>
            <person name="Maeda N."/>
            <person name="Oyama R."/>
            <person name="Ravasi T."/>
            <person name="Lenhard B."/>
            <person name="Wells C."/>
            <person name="Kodzius R."/>
            <person name="Shimokawa K."/>
            <person name="Bajic V.B."/>
            <person name="Brenner S.E."/>
            <person name="Batalov S."/>
            <person name="Forrest A.R."/>
            <person name="Zavolan M."/>
            <person name="Davis M.J."/>
            <person name="Wilming L.G."/>
            <person name="Aidinis V."/>
            <person name="Allen J.E."/>
            <person name="Ambesi-Impiombato A."/>
            <person name="Apweiler R."/>
            <person name="Aturaliya R.N."/>
            <person name="Bailey T.L."/>
            <person name="Bansal M."/>
            <person name="Baxter L."/>
            <person name="Beisel K.W."/>
            <person name="Bersano T."/>
            <person name="Bono H."/>
            <person name="Chalk A.M."/>
            <person name="Chiu K.P."/>
            <person name="Choudhary V."/>
            <person name="Christoffels A."/>
            <person name="Clutterbuck D.R."/>
            <person name="Crowe M.L."/>
            <person name="Dalla E."/>
            <person name="Dalrymple B.P."/>
            <person name="de Bono B."/>
            <person name="Della Gatta G."/>
            <person name="di Bernardo D."/>
            <person name="Down T."/>
            <person name="Engstrom P."/>
            <person name="Fagiolini M."/>
            <person name="Faulkner G."/>
            <person name="Fletcher C.F."/>
            <person name="Fukushima T."/>
            <person name="Furuno M."/>
            <person name="Futaki S."/>
            <person name="Gariboldi M."/>
            <person name="Georgii-Hemming P."/>
            <person name="Gingeras T.R."/>
            <person name="Gojobori T."/>
            <person name="Green R.E."/>
            <person name="Gustincich S."/>
            <person name="Harbers M."/>
            <person name="Hayashi Y."/>
            <person name="Hensch T.K."/>
            <person name="Hirokawa N."/>
            <person name="Hill D."/>
            <person name="Huminiecki L."/>
            <person name="Iacono M."/>
            <person name="Ikeo K."/>
            <person name="Iwama A."/>
            <person name="Ishikawa T."/>
            <person name="Jakt M."/>
            <person name="Kanapin A."/>
            <person name="Katoh M."/>
            <person name="Kawasawa Y."/>
            <person name="Kelso J."/>
            <person name="Kitamura H."/>
            <person name="Kitano H."/>
            <person name="Kollias G."/>
            <person name="Krishnan S.P."/>
            <person name="Kruger A."/>
            <person name="Kummerfeld S.K."/>
            <person name="Kurochkin I.V."/>
            <person name="Lareau L.F."/>
            <person name="Lazarevic D."/>
            <person name="Lipovich L."/>
            <person name="Liu J."/>
            <person name="Liuni S."/>
            <person name="McWilliam S."/>
            <person name="Madan Babu M."/>
            <person name="Madera M."/>
            <person name="Marchionni L."/>
            <person name="Matsuda H."/>
            <person name="Matsuzawa S."/>
            <person name="Miki H."/>
            <person name="Mignone F."/>
            <person name="Miyake S."/>
            <person name="Morris K."/>
            <person name="Mottagui-Tabar S."/>
            <person name="Mulder N."/>
            <person name="Nakano N."/>
            <person name="Nakauchi H."/>
            <person name="Ng P."/>
            <person name="Nilsson R."/>
            <person name="Nishiguchi S."/>
            <person name="Nishikawa S."/>
            <person name="Nori F."/>
            <person name="Ohara O."/>
            <person name="Okazaki Y."/>
            <person name="Orlando V."/>
            <person name="Pang K.C."/>
            <person name="Pavan W.J."/>
            <person name="Pavesi G."/>
            <person name="Pesole G."/>
            <person name="Petrovsky N."/>
            <person name="Piazza S."/>
            <person name="Reed J."/>
            <person name="Reid J.F."/>
            <person name="Ring B.Z."/>
            <person name="Ringwald M."/>
            <person name="Rost B."/>
            <person name="Ruan Y."/>
            <person name="Salzberg S.L."/>
            <person name="Sandelin A."/>
            <person name="Schneider C."/>
            <person name="Schoenbach C."/>
            <person name="Sekiguchi K."/>
            <person name="Semple C.A."/>
            <person name="Seno S."/>
            <person name="Sessa L."/>
            <person name="Sheng Y."/>
            <person name="Shibata Y."/>
            <person name="Shimada H."/>
            <person name="Shimada K."/>
            <person name="Silva D."/>
            <person name="Sinclair B."/>
            <person name="Sperling S."/>
            <person name="Stupka E."/>
            <person name="Sugiura K."/>
            <person name="Sultana R."/>
            <person name="Takenaka Y."/>
            <person name="Taki K."/>
            <person name="Tammoja K."/>
            <person name="Tan S.L."/>
            <person name="Tang S."/>
            <person name="Taylor M.S."/>
            <person name="Tegner J."/>
            <person name="Teichmann S.A."/>
            <person name="Ueda H.R."/>
            <person name="van Nimwegen E."/>
            <person name="Verardo R."/>
            <person name="Wei C.L."/>
            <person name="Yagi K."/>
            <person name="Yamanishi H."/>
            <person name="Zabarovsky E."/>
            <person name="Zhu S."/>
            <person name="Zimmer A."/>
            <person name="Hide W."/>
            <person name="Bult C."/>
            <person name="Grimmond S.M."/>
            <person name="Teasdale R.D."/>
            <person name="Liu E.T."/>
            <person name="Brusic V."/>
            <person name="Quackenbush J."/>
            <person name="Wahlestedt C."/>
            <person name="Mattick J.S."/>
            <person name="Hume D.A."/>
            <person name="Kai C."/>
            <person name="Sasaki D."/>
            <person name="Tomaru Y."/>
            <person name="Fukuda S."/>
            <person name="Kanamori-Katayama M."/>
            <person name="Suzuki M."/>
            <person name="Aoki J."/>
            <person name="Arakawa T."/>
            <person name="Iida J."/>
            <person name="Imamura K."/>
            <person name="Itoh M."/>
            <person name="Kato T."/>
            <person name="Kawaji H."/>
            <person name="Kawagashira N."/>
            <person name="Kawashima T."/>
            <person name="Kojima M."/>
            <person name="Kondo S."/>
            <person name="Konno H."/>
            <person name="Nakano K."/>
            <person name="Ninomiya N."/>
            <person name="Nishio T."/>
            <person name="Okada M."/>
            <person name="Plessy C."/>
            <person name="Shibata K."/>
            <person name="Shiraki T."/>
            <person name="Suzuki S."/>
            <person name="Tagami M."/>
            <person name="Waki K."/>
            <person name="Watahiki A."/>
            <person name="Okamura-Oho Y."/>
            <person name="Suzuki H."/>
            <person name="Kawai J."/>
            <person name="Hayashizaki Y."/>
        </authorList>
    </citation>
    <scope>NUCLEOTIDE SEQUENCE [LARGE SCALE MRNA] (ISOFORMS 1 AND 3)</scope>
    <source>
        <strain>C57BL/6J</strain>
        <tissue>Diencephalon</tissue>
        <tissue>Embryo</tissue>
        <tissue>Eye</tissue>
        <tissue>Thymus</tissue>
    </source>
</reference>
<reference key="2">
    <citation type="journal article" date="2009" name="PLoS Biol.">
        <title>Lineage-specific biology revealed by a finished genome assembly of the mouse.</title>
        <authorList>
            <person name="Church D.M."/>
            <person name="Goodstadt L."/>
            <person name="Hillier L.W."/>
            <person name="Zody M.C."/>
            <person name="Goldstein S."/>
            <person name="She X."/>
            <person name="Bult C.J."/>
            <person name="Agarwala R."/>
            <person name="Cherry J.L."/>
            <person name="DiCuccio M."/>
            <person name="Hlavina W."/>
            <person name="Kapustin Y."/>
            <person name="Meric P."/>
            <person name="Maglott D."/>
            <person name="Birtle Z."/>
            <person name="Marques A.C."/>
            <person name="Graves T."/>
            <person name="Zhou S."/>
            <person name="Teague B."/>
            <person name="Potamousis K."/>
            <person name="Churas C."/>
            <person name="Place M."/>
            <person name="Herschleb J."/>
            <person name="Runnheim R."/>
            <person name="Forrest D."/>
            <person name="Amos-Landgraf J."/>
            <person name="Schwartz D.C."/>
            <person name="Cheng Z."/>
            <person name="Lindblad-Toh K."/>
            <person name="Eichler E.E."/>
            <person name="Ponting C.P."/>
        </authorList>
    </citation>
    <scope>NUCLEOTIDE SEQUENCE [LARGE SCALE GENOMIC DNA]</scope>
    <source>
        <strain>C57BL/6J</strain>
    </source>
</reference>
<reference key="3">
    <citation type="journal article" date="2004" name="Genome Res.">
        <title>The status, quality, and expansion of the NIH full-length cDNA project: the Mammalian Gene Collection (MGC).</title>
        <authorList>
            <consortium name="The MGC Project Team"/>
        </authorList>
    </citation>
    <scope>NUCLEOTIDE SEQUENCE [LARGE SCALE MRNA] (ISOFORMS 1 AND 4)</scope>
    <source>
        <strain>C57BL/6J</strain>
        <tissue>Olfactory epithelium</tissue>
    </source>
</reference>
<reference key="4">
    <citation type="journal article" date="2016" name="Mol. Reprod. Dev.">
        <title>Mouse JMJD4 is dispensable for embryogenesis.</title>
        <authorList>
            <person name="Yoo H."/>
            <person name="Son D."/>
            <person name="Lee Y.J."/>
            <person name="Hong K."/>
        </authorList>
    </citation>
    <scope>FUNCTION</scope>
    <scope>DISRUPTION PHENOTYPE</scope>
</reference>
<accession>Q8BFT6</accession>
<accession>Q4QQM9</accession>
<accession>Q80ZI5</accession>
<accession>Q8BPV8</accession>
<gene>
    <name type="primary">Jmjd4</name>
</gene>
<protein>
    <recommendedName>
        <fullName evidence="2">2-oxoglutarate and iron-dependent oxygenase JMJD4</fullName>
        <ecNumber>1.14.11.-</ecNumber>
    </recommendedName>
    <alternativeName>
        <fullName>JmjC domain-containing protein 4</fullName>
    </alternativeName>
    <alternativeName>
        <fullName>Jumonji domain-containing protein 4</fullName>
    </alternativeName>
    <alternativeName>
        <fullName evidence="2">Lysyl-hydroxylase JMJD4</fullName>
    </alternativeName>
</protein>
<organism>
    <name type="scientific">Mus musculus</name>
    <name type="common">Mouse</name>
    <dbReference type="NCBI Taxonomy" id="10090"/>
    <lineage>
        <taxon>Eukaryota</taxon>
        <taxon>Metazoa</taxon>
        <taxon>Chordata</taxon>
        <taxon>Craniata</taxon>
        <taxon>Vertebrata</taxon>
        <taxon>Euteleostomi</taxon>
        <taxon>Mammalia</taxon>
        <taxon>Eutheria</taxon>
        <taxon>Euarchontoglires</taxon>
        <taxon>Glires</taxon>
        <taxon>Rodentia</taxon>
        <taxon>Myomorpha</taxon>
        <taxon>Muroidea</taxon>
        <taxon>Muridae</taxon>
        <taxon>Murinae</taxon>
        <taxon>Mus</taxon>
        <taxon>Mus</taxon>
    </lineage>
</organism>
<name>JMJD4_MOUSE</name>
<keyword id="KW-0025">Alternative splicing</keyword>
<keyword id="KW-0963">Cytoplasm</keyword>
<keyword id="KW-0223">Dioxygenase</keyword>
<keyword id="KW-0408">Iron</keyword>
<keyword id="KW-0479">Metal-binding</keyword>
<keyword id="KW-0560">Oxidoreductase</keyword>
<keyword id="KW-1185">Reference proteome</keyword>
<proteinExistence type="evidence at transcript level"/>
<sequence>MDRETRTFAERYYRDLRDPVPSGGGGPTPSGVTFIQTPNAFSYADFVKGFLLPNLPCVFSSAFTEGWGSRRRWVTSEGKPDFEYLQQKYGDAVVPVANCGVREYNSNPKEHMSFRDYISYWKDYIQGSYSSSRGCLYLKDWHLCRDSLVNDLEDIFTLPVYFSSDWLNEFWDVLNVDDYRFVYAGPRGTWSPFHADIFRSFSWSVNICGKKKWLFFPPGEEEALRDCHGNLPYDVTSTELLDTHLYPKIQHHSLPIEVIQEPGEMVFVPSGWHHQVYNLDDTISINHNWVNGCNLPNMWHFLQQELQAVQHEVEEWKDSMPDWHHHCQVIMKSCTGINFEEFYHFLKVIAEKRLLVLEQGLKGDSGDSRSLDLGLQQAAFDIGRLADVLASVVVNPDFQRVDTSAFSPQPEELLQQLEDAVAAAEAL</sequence>
<dbReference type="EC" id="1.14.11.-"/>
<dbReference type="EMBL" id="AK037954">
    <property type="protein sequence ID" value="BAC29907.1"/>
    <property type="molecule type" value="mRNA"/>
</dbReference>
<dbReference type="EMBL" id="AK052144">
    <property type="protein sequence ID" value="BAC34856.1"/>
    <property type="molecule type" value="mRNA"/>
</dbReference>
<dbReference type="EMBL" id="AK079104">
    <property type="protein sequence ID" value="BAC37541.1"/>
    <property type="molecule type" value="mRNA"/>
</dbReference>
<dbReference type="EMBL" id="AK145394">
    <property type="protein sequence ID" value="BAE26409.1"/>
    <property type="molecule type" value="mRNA"/>
</dbReference>
<dbReference type="EMBL" id="AL592522">
    <property type="status" value="NOT_ANNOTATED_CDS"/>
    <property type="molecule type" value="Genomic_DNA"/>
</dbReference>
<dbReference type="EMBL" id="AL713994">
    <property type="status" value="NOT_ANNOTATED_CDS"/>
    <property type="molecule type" value="Genomic_DNA"/>
</dbReference>
<dbReference type="EMBL" id="BX255278">
    <property type="status" value="NOT_ANNOTATED_CDS"/>
    <property type="molecule type" value="Genomic_DNA"/>
</dbReference>
<dbReference type="EMBL" id="BC049148">
    <property type="protein sequence ID" value="AAH49148.1"/>
    <property type="molecule type" value="mRNA"/>
</dbReference>
<dbReference type="EMBL" id="BC116707">
    <property type="protein sequence ID" value="AAI16708.1"/>
    <property type="molecule type" value="mRNA"/>
</dbReference>
<dbReference type="EMBL" id="BC118020">
    <property type="protein sequence ID" value="AAI18021.1"/>
    <property type="molecule type" value="mRNA"/>
</dbReference>
<dbReference type="CCDS" id="CCDS24768.1">
    <molecule id="Q8BFT6-1"/>
</dbReference>
<dbReference type="CCDS" id="CCDS56777.1">
    <molecule id="Q8BFT6-3"/>
</dbReference>
<dbReference type="RefSeq" id="NP_001191997.1">
    <molecule id="Q8BFT6-3"/>
    <property type="nucleotide sequence ID" value="NM_001205068.1"/>
</dbReference>
<dbReference type="RefSeq" id="NP_848774.1">
    <molecule id="Q8BFT6-1"/>
    <property type="nucleotide sequence ID" value="NM_178659.6"/>
</dbReference>
<dbReference type="FunCoup" id="Q8BFT6">
    <property type="interactions" value="4599"/>
</dbReference>
<dbReference type="STRING" id="10090.ENSMUSP00000104407"/>
<dbReference type="GlyGen" id="Q8BFT6">
    <property type="glycosylation" value="1 site"/>
</dbReference>
<dbReference type="PhosphoSitePlus" id="Q8BFT6"/>
<dbReference type="PaxDb" id="10090-ENSMUSP00000104407"/>
<dbReference type="ProteomicsDB" id="269366">
    <molecule id="Q8BFT6-1"/>
</dbReference>
<dbReference type="ProteomicsDB" id="269367">
    <molecule id="Q8BFT6-3"/>
</dbReference>
<dbReference type="ProteomicsDB" id="269368">
    <molecule id="Q8BFT6-4"/>
</dbReference>
<dbReference type="Antibodypedia" id="20772">
    <property type="antibodies" value="285 antibodies from 30 providers"/>
</dbReference>
<dbReference type="DNASU" id="194952"/>
<dbReference type="Ensembl" id="ENSMUST00000045279.13">
    <molecule id="Q8BFT6-3"/>
    <property type="protein sequence ID" value="ENSMUSP00000043473.7"/>
    <property type="gene ID" value="ENSMUSG00000036819.15"/>
</dbReference>
<dbReference type="Ensembl" id="ENSMUST00000108777.10">
    <molecule id="Q8BFT6-1"/>
    <property type="protein sequence ID" value="ENSMUSP00000104407.4"/>
    <property type="gene ID" value="ENSMUSG00000036819.15"/>
</dbReference>
<dbReference type="Ensembl" id="ENSMUST00000147163.8">
    <molecule id="Q8BFT6-4"/>
    <property type="protein sequence ID" value="ENSMUSP00000123531.2"/>
    <property type="gene ID" value="ENSMUSG00000036819.15"/>
</dbReference>
<dbReference type="GeneID" id="194952"/>
<dbReference type="KEGG" id="mmu:194952"/>
<dbReference type="UCSC" id="uc007jdu.2">
    <molecule id="Q8BFT6-1"/>
    <property type="organism name" value="mouse"/>
</dbReference>
<dbReference type="UCSC" id="uc007jdw.2">
    <molecule id="Q8BFT6-3"/>
    <property type="organism name" value="mouse"/>
</dbReference>
<dbReference type="AGR" id="MGI:2144404"/>
<dbReference type="CTD" id="65094"/>
<dbReference type="MGI" id="MGI:2144404">
    <property type="gene designation" value="Jmjd4"/>
</dbReference>
<dbReference type="VEuPathDB" id="HostDB:ENSMUSG00000036819"/>
<dbReference type="eggNOG" id="KOG2131">
    <property type="taxonomic scope" value="Eukaryota"/>
</dbReference>
<dbReference type="GeneTree" id="ENSGT00940000159380"/>
<dbReference type="HOGENOM" id="CLU_016785_2_2_1"/>
<dbReference type="InParanoid" id="Q8BFT6"/>
<dbReference type="OMA" id="HPCMFSR"/>
<dbReference type="OrthoDB" id="203487at2759"/>
<dbReference type="PhylomeDB" id="Q8BFT6"/>
<dbReference type="TreeFam" id="TF105936"/>
<dbReference type="Reactome" id="R-MMU-9629569">
    <property type="pathway name" value="Protein hydroxylation"/>
</dbReference>
<dbReference type="BioGRID-ORCS" id="194952">
    <property type="hits" value="0 hits in 82 CRISPR screens"/>
</dbReference>
<dbReference type="PRO" id="PR:Q8BFT6"/>
<dbReference type="Proteomes" id="UP000000589">
    <property type="component" value="Chromosome 11"/>
</dbReference>
<dbReference type="RNAct" id="Q8BFT6">
    <property type="molecule type" value="protein"/>
</dbReference>
<dbReference type="Bgee" id="ENSMUSG00000036819">
    <property type="expression patterns" value="Expressed in ear vesicle and 153 other cell types or tissues"/>
</dbReference>
<dbReference type="GO" id="GO:0005737">
    <property type="term" value="C:cytoplasm"/>
    <property type="evidence" value="ECO:0000250"/>
    <property type="project" value="UniProtKB"/>
</dbReference>
<dbReference type="GO" id="GO:0016706">
    <property type="term" value="F:2-oxoglutarate-dependent dioxygenase activity"/>
    <property type="evidence" value="ECO:0000250"/>
    <property type="project" value="UniProtKB"/>
</dbReference>
<dbReference type="GO" id="GO:0046872">
    <property type="term" value="F:metal ion binding"/>
    <property type="evidence" value="ECO:0007669"/>
    <property type="project" value="UniProtKB-KW"/>
</dbReference>
<dbReference type="GO" id="GO:0106156">
    <property type="term" value="F:peptidyl-lysine 4-dioxygenase activity"/>
    <property type="evidence" value="ECO:0007669"/>
    <property type="project" value="RHEA"/>
</dbReference>
<dbReference type="GO" id="GO:0045905">
    <property type="term" value="P:positive regulation of translational termination"/>
    <property type="evidence" value="ECO:0000250"/>
    <property type="project" value="UniProtKB"/>
</dbReference>
<dbReference type="GO" id="GO:0018126">
    <property type="term" value="P:protein hydroxylation"/>
    <property type="evidence" value="ECO:0000250"/>
    <property type="project" value="UniProtKB"/>
</dbReference>
<dbReference type="FunFam" id="2.60.120.650:FF:000030">
    <property type="entry name" value="JmjC domain-containing protein 4"/>
    <property type="match status" value="1"/>
</dbReference>
<dbReference type="Gene3D" id="2.60.120.650">
    <property type="entry name" value="Cupin"/>
    <property type="match status" value="1"/>
</dbReference>
<dbReference type="InterPro" id="IPR041667">
    <property type="entry name" value="Cupin_8"/>
</dbReference>
<dbReference type="InterPro" id="IPR003347">
    <property type="entry name" value="JmjC_dom"/>
</dbReference>
<dbReference type="InterPro" id="IPR050910">
    <property type="entry name" value="JMJD6_ArgDemeth/LysHydrox"/>
</dbReference>
<dbReference type="PANTHER" id="PTHR12480:SF6">
    <property type="entry name" value="2-OXOGLUTARATE AND IRON-DEPENDENT OXYGENASE JMJD4"/>
    <property type="match status" value="1"/>
</dbReference>
<dbReference type="PANTHER" id="PTHR12480">
    <property type="entry name" value="ARGININE DEMETHYLASE AND LYSYL-HYDROXYLASE JMJD"/>
    <property type="match status" value="1"/>
</dbReference>
<dbReference type="Pfam" id="PF13621">
    <property type="entry name" value="Cupin_8"/>
    <property type="match status" value="1"/>
</dbReference>
<dbReference type="SMART" id="SM00558">
    <property type="entry name" value="JmjC"/>
    <property type="match status" value="1"/>
</dbReference>
<dbReference type="SUPFAM" id="SSF51197">
    <property type="entry name" value="Clavaminate synthase-like"/>
    <property type="match status" value="1"/>
</dbReference>
<dbReference type="PROSITE" id="PS51184">
    <property type="entry name" value="JMJC"/>
    <property type="match status" value="1"/>
</dbReference>